<organism>
    <name type="scientific">Clostridium perfringens (strain SM101 / Type A)</name>
    <dbReference type="NCBI Taxonomy" id="289380"/>
    <lineage>
        <taxon>Bacteria</taxon>
        <taxon>Bacillati</taxon>
        <taxon>Bacillota</taxon>
        <taxon>Clostridia</taxon>
        <taxon>Eubacteriales</taxon>
        <taxon>Clostridiaceae</taxon>
        <taxon>Clostridium</taxon>
    </lineage>
</organism>
<sequence length="205" mass="23327">MRLGRDFYNRDTLTVAKELLGKVLVRNINGVTLKGKIVETEAYIGAIDKASHAYGGKRTNRTETLYADPGTVYVYIIYGMYHCLNLISEEKDVAGGVLIRGIEPLEGIEEMSKLRYRKNYEELSSYEKKNFSNGPSKLCMALGIDKGENGINTISSEEIYVEDDSSIKEDFSIVEAKRIGIDYAEEARDFLWRFYIKDNKFVSKK</sequence>
<feature type="chain" id="PRO_0000265011" description="Putative 3-methyladenine DNA glycosylase">
    <location>
        <begin position="1"/>
        <end position="205"/>
    </location>
</feature>
<proteinExistence type="inferred from homology"/>
<accession>Q0SPY0</accession>
<reference key="1">
    <citation type="journal article" date="2006" name="Genome Res.">
        <title>Skewed genomic variability in strains of the toxigenic bacterial pathogen, Clostridium perfringens.</title>
        <authorList>
            <person name="Myers G.S.A."/>
            <person name="Rasko D.A."/>
            <person name="Cheung J.K."/>
            <person name="Ravel J."/>
            <person name="Seshadri R."/>
            <person name="DeBoy R.T."/>
            <person name="Ren Q."/>
            <person name="Varga J."/>
            <person name="Awad M.M."/>
            <person name="Brinkac L.M."/>
            <person name="Daugherty S.C."/>
            <person name="Haft D.H."/>
            <person name="Dodson R.J."/>
            <person name="Madupu R."/>
            <person name="Nelson W.C."/>
            <person name="Rosovitz M.J."/>
            <person name="Sullivan S.A."/>
            <person name="Khouri H."/>
            <person name="Dimitrov G.I."/>
            <person name="Watkins K.L."/>
            <person name="Mulligan S."/>
            <person name="Benton J."/>
            <person name="Radune D."/>
            <person name="Fisher D.J."/>
            <person name="Atkins H.S."/>
            <person name="Hiscox T."/>
            <person name="Jost B.H."/>
            <person name="Billington S.J."/>
            <person name="Songer J.G."/>
            <person name="McClane B.A."/>
            <person name="Titball R.W."/>
            <person name="Rood J.I."/>
            <person name="Melville S.B."/>
            <person name="Paulsen I.T."/>
        </authorList>
    </citation>
    <scope>NUCLEOTIDE SEQUENCE [LARGE SCALE GENOMIC DNA]</scope>
    <source>
        <strain>SM101 / Type A</strain>
    </source>
</reference>
<dbReference type="EC" id="3.2.2.-" evidence="1"/>
<dbReference type="EMBL" id="CP000312">
    <property type="protein sequence ID" value="ABG86465.1"/>
    <property type="molecule type" value="Genomic_DNA"/>
</dbReference>
<dbReference type="RefSeq" id="WP_011593256.1">
    <property type="nucleotide sequence ID" value="NC_008262.1"/>
</dbReference>
<dbReference type="SMR" id="Q0SPY0"/>
<dbReference type="KEGG" id="cpr:CPR_2580"/>
<dbReference type="BioCyc" id="CPER289380:GI76-2597-MONOMER"/>
<dbReference type="Proteomes" id="UP000001824">
    <property type="component" value="Chromosome"/>
</dbReference>
<dbReference type="GO" id="GO:0003905">
    <property type="term" value="F:alkylbase DNA N-glycosylase activity"/>
    <property type="evidence" value="ECO:0007669"/>
    <property type="project" value="InterPro"/>
</dbReference>
<dbReference type="GO" id="GO:0003677">
    <property type="term" value="F:DNA binding"/>
    <property type="evidence" value="ECO:0007669"/>
    <property type="project" value="InterPro"/>
</dbReference>
<dbReference type="GO" id="GO:0006284">
    <property type="term" value="P:base-excision repair"/>
    <property type="evidence" value="ECO:0007669"/>
    <property type="project" value="InterPro"/>
</dbReference>
<dbReference type="CDD" id="cd00540">
    <property type="entry name" value="AAG"/>
    <property type="match status" value="1"/>
</dbReference>
<dbReference type="FunFam" id="3.10.300.10:FF:000001">
    <property type="entry name" value="Putative 3-methyladenine DNA glycosylase"/>
    <property type="match status" value="1"/>
</dbReference>
<dbReference type="Gene3D" id="3.10.300.10">
    <property type="entry name" value="Methylpurine-DNA glycosylase (MPG)"/>
    <property type="match status" value="1"/>
</dbReference>
<dbReference type="HAMAP" id="MF_00527">
    <property type="entry name" value="3MGH"/>
    <property type="match status" value="1"/>
</dbReference>
<dbReference type="InterPro" id="IPR011034">
    <property type="entry name" value="Formyl_transferase-like_C_sf"/>
</dbReference>
<dbReference type="InterPro" id="IPR003180">
    <property type="entry name" value="MPG"/>
</dbReference>
<dbReference type="InterPro" id="IPR036995">
    <property type="entry name" value="MPG_sf"/>
</dbReference>
<dbReference type="NCBIfam" id="TIGR00567">
    <property type="entry name" value="3mg"/>
    <property type="match status" value="1"/>
</dbReference>
<dbReference type="NCBIfam" id="NF002001">
    <property type="entry name" value="PRK00802.1-1"/>
    <property type="match status" value="1"/>
</dbReference>
<dbReference type="PANTHER" id="PTHR10429">
    <property type="entry name" value="DNA-3-METHYLADENINE GLYCOSYLASE"/>
    <property type="match status" value="1"/>
</dbReference>
<dbReference type="PANTHER" id="PTHR10429:SF0">
    <property type="entry name" value="DNA-3-METHYLADENINE GLYCOSYLASE"/>
    <property type="match status" value="1"/>
</dbReference>
<dbReference type="Pfam" id="PF02245">
    <property type="entry name" value="Pur_DNA_glyco"/>
    <property type="match status" value="1"/>
</dbReference>
<dbReference type="SUPFAM" id="SSF50486">
    <property type="entry name" value="FMT C-terminal domain-like"/>
    <property type="match status" value="1"/>
</dbReference>
<keyword id="KW-0227">DNA damage</keyword>
<keyword id="KW-0234">DNA repair</keyword>
<keyword id="KW-0378">Hydrolase</keyword>
<evidence type="ECO:0000255" key="1">
    <source>
        <dbReference type="HAMAP-Rule" id="MF_00527"/>
    </source>
</evidence>
<comment type="similarity">
    <text evidence="1">Belongs to the DNA glycosylase MPG family.</text>
</comment>
<name>3MGH_CLOPS</name>
<gene>
    <name type="ordered locus">CPR_2580</name>
</gene>
<protein>
    <recommendedName>
        <fullName evidence="1">Putative 3-methyladenine DNA glycosylase</fullName>
        <ecNumber evidence="1">3.2.2.-</ecNumber>
    </recommendedName>
</protein>